<evidence type="ECO:0000255" key="1">
    <source>
        <dbReference type="PROSITE-ProRule" id="PRU00176"/>
    </source>
</evidence>
<evidence type="ECO:0000256" key="2">
    <source>
        <dbReference type="SAM" id="MobiDB-lite"/>
    </source>
</evidence>
<evidence type="ECO:0000269" key="3">
    <source>
    </source>
</evidence>
<evidence type="ECO:0000269" key="4">
    <source>
    </source>
</evidence>
<evidence type="ECO:0000305" key="5"/>
<evidence type="ECO:0007744" key="6">
    <source>
    </source>
</evidence>
<proteinExistence type="evidence at protein level"/>
<organism>
    <name type="scientific">Mus musculus</name>
    <name type="common">Mouse</name>
    <dbReference type="NCBI Taxonomy" id="10090"/>
    <lineage>
        <taxon>Eukaryota</taxon>
        <taxon>Metazoa</taxon>
        <taxon>Chordata</taxon>
        <taxon>Craniata</taxon>
        <taxon>Vertebrata</taxon>
        <taxon>Euteleostomi</taxon>
        <taxon>Mammalia</taxon>
        <taxon>Eutheria</taxon>
        <taxon>Euarchontoglires</taxon>
        <taxon>Glires</taxon>
        <taxon>Rodentia</taxon>
        <taxon>Myomorpha</taxon>
        <taxon>Muroidea</taxon>
        <taxon>Muridae</taxon>
        <taxon>Murinae</taxon>
        <taxon>Mus</taxon>
        <taxon>Mus</taxon>
    </lineage>
</organism>
<accession>Q8C7E9</accession>
<accession>Q6A016</accession>
<accession>Q8BHH7</accession>
<accession>Q8C3W7</accession>
<accession>Q8R2Y1</accession>
<accession>Q9EPU3</accession>
<reference key="1">
    <citation type="journal article" date="2001" name="J. Biol. Chem.">
        <title>The gene for a variant form of the polyadenylation protein CstF-64 is on chromosome 19 and is expressed in pachytene spermatocytes in mice.</title>
        <authorList>
            <person name="Dass B."/>
            <person name="McMahon K.W."/>
            <person name="Jenkins N.A."/>
            <person name="Gilbert D.J."/>
            <person name="Copeland N.G."/>
            <person name="MacDonald C.C."/>
        </authorList>
    </citation>
    <scope>NUCLEOTIDE SEQUENCE [MRNA]</scope>
    <scope>RNA-BINDING</scope>
    <scope>FUNCTION</scope>
    <source>
        <strain>CD-1</strain>
        <tissue>Testis</tissue>
    </source>
</reference>
<reference key="2">
    <citation type="journal article" date="2004" name="DNA Res.">
        <title>Prediction of the coding sequences of mouse homologues of KIAA gene: IV. The complete nucleotide sequences of 500 mouse KIAA-homologous cDNAs identified by screening of terminal sequences of cDNA clones randomly sampled from size-fractionated libraries.</title>
        <authorList>
            <person name="Okazaki N."/>
            <person name="Kikuno R."/>
            <person name="Ohara R."/>
            <person name="Inamoto S."/>
            <person name="Koseki H."/>
            <person name="Hiraoka S."/>
            <person name="Saga Y."/>
            <person name="Seino S."/>
            <person name="Nishimura M."/>
            <person name="Kaisho T."/>
            <person name="Hoshino K."/>
            <person name="Kitamura H."/>
            <person name="Nagase T."/>
            <person name="Ohara O."/>
            <person name="Koga H."/>
        </authorList>
    </citation>
    <scope>NUCLEOTIDE SEQUENCE [LARGE SCALE MRNA]</scope>
    <source>
        <tissue>Fetal brain</tissue>
    </source>
</reference>
<reference key="3">
    <citation type="journal article" date="2005" name="Science">
        <title>The transcriptional landscape of the mammalian genome.</title>
        <authorList>
            <person name="Carninci P."/>
            <person name="Kasukawa T."/>
            <person name="Katayama S."/>
            <person name="Gough J."/>
            <person name="Frith M.C."/>
            <person name="Maeda N."/>
            <person name="Oyama R."/>
            <person name="Ravasi T."/>
            <person name="Lenhard B."/>
            <person name="Wells C."/>
            <person name="Kodzius R."/>
            <person name="Shimokawa K."/>
            <person name="Bajic V.B."/>
            <person name="Brenner S.E."/>
            <person name="Batalov S."/>
            <person name="Forrest A.R."/>
            <person name="Zavolan M."/>
            <person name="Davis M.J."/>
            <person name="Wilming L.G."/>
            <person name="Aidinis V."/>
            <person name="Allen J.E."/>
            <person name="Ambesi-Impiombato A."/>
            <person name="Apweiler R."/>
            <person name="Aturaliya R.N."/>
            <person name="Bailey T.L."/>
            <person name="Bansal M."/>
            <person name="Baxter L."/>
            <person name="Beisel K.W."/>
            <person name="Bersano T."/>
            <person name="Bono H."/>
            <person name="Chalk A.M."/>
            <person name="Chiu K.P."/>
            <person name="Choudhary V."/>
            <person name="Christoffels A."/>
            <person name="Clutterbuck D.R."/>
            <person name="Crowe M.L."/>
            <person name="Dalla E."/>
            <person name="Dalrymple B.P."/>
            <person name="de Bono B."/>
            <person name="Della Gatta G."/>
            <person name="di Bernardo D."/>
            <person name="Down T."/>
            <person name="Engstrom P."/>
            <person name="Fagiolini M."/>
            <person name="Faulkner G."/>
            <person name="Fletcher C.F."/>
            <person name="Fukushima T."/>
            <person name="Furuno M."/>
            <person name="Futaki S."/>
            <person name="Gariboldi M."/>
            <person name="Georgii-Hemming P."/>
            <person name="Gingeras T.R."/>
            <person name="Gojobori T."/>
            <person name="Green R.E."/>
            <person name="Gustincich S."/>
            <person name="Harbers M."/>
            <person name="Hayashi Y."/>
            <person name="Hensch T.K."/>
            <person name="Hirokawa N."/>
            <person name="Hill D."/>
            <person name="Huminiecki L."/>
            <person name="Iacono M."/>
            <person name="Ikeo K."/>
            <person name="Iwama A."/>
            <person name="Ishikawa T."/>
            <person name="Jakt M."/>
            <person name="Kanapin A."/>
            <person name="Katoh M."/>
            <person name="Kawasawa Y."/>
            <person name="Kelso J."/>
            <person name="Kitamura H."/>
            <person name="Kitano H."/>
            <person name="Kollias G."/>
            <person name="Krishnan S.P."/>
            <person name="Kruger A."/>
            <person name="Kummerfeld S.K."/>
            <person name="Kurochkin I.V."/>
            <person name="Lareau L.F."/>
            <person name="Lazarevic D."/>
            <person name="Lipovich L."/>
            <person name="Liu J."/>
            <person name="Liuni S."/>
            <person name="McWilliam S."/>
            <person name="Madan Babu M."/>
            <person name="Madera M."/>
            <person name="Marchionni L."/>
            <person name="Matsuda H."/>
            <person name="Matsuzawa S."/>
            <person name="Miki H."/>
            <person name="Mignone F."/>
            <person name="Miyake S."/>
            <person name="Morris K."/>
            <person name="Mottagui-Tabar S."/>
            <person name="Mulder N."/>
            <person name="Nakano N."/>
            <person name="Nakauchi H."/>
            <person name="Ng P."/>
            <person name="Nilsson R."/>
            <person name="Nishiguchi S."/>
            <person name="Nishikawa S."/>
            <person name="Nori F."/>
            <person name="Ohara O."/>
            <person name="Okazaki Y."/>
            <person name="Orlando V."/>
            <person name="Pang K.C."/>
            <person name="Pavan W.J."/>
            <person name="Pavesi G."/>
            <person name="Pesole G."/>
            <person name="Petrovsky N."/>
            <person name="Piazza S."/>
            <person name="Reed J."/>
            <person name="Reid J.F."/>
            <person name="Ring B.Z."/>
            <person name="Ringwald M."/>
            <person name="Rost B."/>
            <person name="Ruan Y."/>
            <person name="Salzberg S.L."/>
            <person name="Sandelin A."/>
            <person name="Schneider C."/>
            <person name="Schoenbach C."/>
            <person name="Sekiguchi K."/>
            <person name="Semple C.A."/>
            <person name="Seno S."/>
            <person name="Sessa L."/>
            <person name="Sheng Y."/>
            <person name="Shibata Y."/>
            <person name="Shimada H."/>
            <person name="Shimada K."/>
            <person name="Silva D."/>
            <person name="Sinclair B."/>
            <person name="Sperling S."/>
            <person name="Stupka E."/>
            <person name="Sugiura K."/>
            <person name="Sultana R."/>
            <person name="Takenaka Y."/>
            <person name="Taki K."/>
            <person name="Tammoja K."/>
            <person name="Tan S.L."/>
            <person name="Tang S."/>
            <person name="Taylor M.S."/>
            <person name="Tegner J."/>
            <person name="Teichmann S.A."/>
            <person name="Ueda H.R."/>
            <person name="van Nimwegen E."/>
            <person name="Verardo R."/>
            <person name="Wei C.L."/>
            <person name="Yagi K."/>
            <person name="Yamanishi H."/>
            <person name="Zabarovsky E."/>
            <person name="Zhu S."/>
            <person name="Zimmer A."/>
            <person name="Hide W."/>
            <person name="Bult C."/>
            <person name="Grimmond S.M."/>
            <person name="Teasdale R.D."/>
            <person name="Liu E.T."/>
            <person name="Brusic V."/>
            <person name="Quackenbush J."/>
            <person name="Wahlestedt C."/>
            <person name="Mattick J.S."/>
            <person name="Hume D.A."/>
            <person name="Kai C."/>
            <person name="Sasaki D."/>
            <person name="Tomaru Y."/>
            <person name="Fukuda S."/>
            <person name="Kanamori-Katayama M."/>
            <person name="Suzuki M."/>
            <person name="Aoki J."/>
            <person name="Arakawa T."/>
            <person name="Iida J."/>
            <person name="Imamura K."/>
            <person name="Itoh M."/>
            <person name="Kato T."/>
            <person name="Kawaji H."/>
            <person name="Kawagashira N."/>
            <person name="Kawashima T."/>
            <person name="Kojima M."/>
            <person name="Kondo S."/>
            <person name="Konno H."/>
            <person name="Nakano K."/>
            <person name="Ninomiya N."/>
            <person name="Nishio T."/>
            <person name="Okada M."/>
            <person name="Plessy C."/>
            <person name="Shibata K."/>
            <person name="Shiraki T."/>
            <person name="Suzuki S."/>
            <person name="Tagami M."/>
            <person name="Waki K."/>
            <person name="Watahiki A."/>
            <person name="Okamura-Oho Y."/>
            <person name="Suzuki H."/>
            <person name="Kawai J."/>
            <person name="Hayashizaki Y."/>
        </authorList>
    </citation>
    <scope>NUCLEOTIDE SEQUENCE [LARGE SCALE MRNA]</scope>
    <source>
        <strain>C57BL/6J</strain>
        <tissue>Embryo</tissue>
        <tissue>Heart</tissue>
        <tissue>Liver</tissue>
    </source>
</reference>
<reference key="4">
    <citation type="journal article" date="2004" name="Genome Res.">
        <title>The status, quality, and expansion of the NIH full-length cDNA project: the Mammalian Gene Collection (MGC).</title>
        <authorList>
            <consortium name="The MGC Project Team"/>
        </authorList>
    </citation>
    <scope>NUCLEOTIDE SEQUENCE [LARGE SCALE MRNA]</scope>
    <source>
        <strain>FVB/N-3</strain>
        <tissue>Mammary tumor</tissue>
    </source>
</reference>
<reference key="5">
    <citation type="journal article" date="2004" name="Biol. Reprod.">
        <title>Developmental distribution of the polyadenylation protein CstF-64 and the variant tauCstF-64 in mouse and rat testis.</title>
        <authorList>
            <person name="Wallace A.M."/>
            <person name="Denison T.L."/>
            <person name="Attaya E.N."/>
            <person name="MacDonald C.C."/>
        </authorList>
    </citation>
    <scope>TISSUE SPECIFICITY</scope>
    <scope>SUBCELLULAR LOCATION</scope>
</reference>
<reference key="6">
    <citation type="journal article" date="2010" name="Cell">
        <title>A tissue-specific atlas of mouse protein phosphorylation and expression.</title>
        <authorList>
            <person name="Huttlin E.L."/>
            <person name="Jedrychowski M.P."/>
            <person name="Elias J.E."/>
            <person name="Goswami T."/>
            <person name="Rad R."/>
            <person name="Beausoleil S.A."/>
            <person name="Villen J."/>
            <person name="Haas W."/>
            <person name="Sowa M.E."/>
            <person name="Gygi S.P."/>
        </authorList>
    </citation>
    <scope>PHOSPHORYLATION [LARGE SCALE ANALYSIS] AT SER-579</scope>
    <scope>IDENTIFICATION BY MASS SPECTROMETRY [LARGE SCALE ANALYSIS]</scope>
    <source>
        <tissue>Brain</tissue>
        <tissue>Testis</tissue>
    </source>
</reference>
<feature type="chain" id="PRO_0000081535" description="Cleavage stimulation factor subunit 2 tau variant">
    <location>
        <begin position="1"/>
        <end position="632"/>
    </location>
</feature>
<feature type="domain" description="RRM" evidence="1">
    <location>
        <begin position="16"/>
        <end position="94"/>
    </location>
</feature>
<feature type="repeat" description="1-1; approximate">
    <location>
        <begin position="428"/>
        <end position="432"/>
    </location>
</feature>
<feature type="repeat" description="1-2; approximate">
    <location>
        <begin position="433"/>
        <end position="437"/>
    </location>
</feature>
<feature type="repeat" description="1-3; approximate">
    <location>
        <begin position="438"/>
        <end position="442"/>
    </location>
</feature>
<feature type="repeat" description="1-4; approximate">
    <location>
        <begin position="443"/>
        <end position="446"/>
    </location>
</feature>
<feature type="repeat" description="1-5; approximate">
    <location>
        <begin position="447"/>
        <end position="451"/>
    </location>
</feature>
<feature type="repeat" description="1-6">
    <location>
        <begin position="452"/>
        <end position="456"/>
    </location>
</feature>
<feature type="repeat" description="1-7; approximate">
    <location>
        <begin position="457"/>
        <end position="461"/>
    </location>
</feature>
<feature type="repeat" description="1-8; approximate">
    <location>
        <begin position="462"/>
        <end position="466"/>
    </location>
</feature>
<feature type="repeat" description="2-1; approximate">
    <location>
        <begin position="508"/>
        <end position="512"/>
    </location>
</feature>
<feature type="repeat" description="2-2">
    <location>
        <begin position="513"/>
        <end position="517"/>
    </location>
</feature>
<feature type="repeat" description="2-3; approximate">
    <location>
        <begin position="518"/>
        <end position="522"/>
    </location>
</feature>
<feature type="repeat" description="2-4">
    <location>
        <begin position="523"/>
        <end position="527"/>
    </location>
</feature>
<feature type="repeat" description="2-5; approximate">
    <location>
        <begin position="528"/>
        <end position="532"/>
    </location>
</feature>
<feature type="repeat" description="2-6">
    <location>
        <begin position="533"/>
        <end position="537"/>
    </location>
</feature>
<feature type="repeat" description="2-7; approximate">
    <location>
        <begin position="538"/>
        <end position="542"/>
    </location>
</feature>
<feature type="repeat" description="2-8">
    <location>
        <begin position="543"/>
        <end position="547"/>
    </location>
</feature>
<feature type="repeat" description="2-9; approximate">
    <location>
        <begin position="548"/>
        <end position="551"/>
    </location>
</feature>
<feature type="repeat" description="2-10; approximate">
    <location>
        <begin position="552"/>
        <end position="556"/>
    </location>
</feature>
<feature type="repeat" description="2-11; approximate">
    <location>
        <begin position="557"/>
        <end position="560"/>
    </location>
</feature>
<feature type="repeat" description="2-12">
    <location>
        <begin position="561"/>
        <end position="565"/>
    </location>
</feature>
<feature type="region of interest" description="Disordered" evidence="2">
    <location>
        <begin position="201"/>
        <end position="296"/>
    </location>
</feature>
<feature type="region of interest" description="Disordered" evidence="2">
    <location>
        <begin position="365"/>
        <end position="433"/>
    </location>
</feature>
<feature type="region of interest" description="8 X 5 AA tandem repeats of M-E-T-R-[AG]">
    <location>
        <begin position="428"/>
        <end position="466"/>
    </location>
</feature>
<feature type="region of interest" description="12 X 5 AA tandem repeats of G-[AT]-G-[MI]-Q">
    <location>
        <begin position="508"/>
        <end position="565"/>
    </location>
</feature>
<feature type="region of interest" description="Disordered" evidence="2">
    <location>
        <begin position="519"/>
        <end position="590"/>
    </location>
</feature>
<feature type="compositionally biased region" description="Pro residues" evidence="2">
    <location>
        <begin position="213"/>
        <end position="233"/>
    </location>
</feature>
<feature type="compositionally biased region" description="Low complexity" evidence="2">
    <location>
        <begin position="234"/>
        <end position="244"/>
    </location>
</feature>
<feature type="compositionally biased region" description="Pro residues" evidence="2">
    <location>
        <begin position="275"/>
        <end position="287"/>
    </location>
</feature>
<feature type="compositionally biased region" description="Low complexity" evidence="2">
    <location>
        <begin position="365"/>
        <end position="375"/>
    </location>
</feature>
<feature type="compositionally biased region" description="Basic and acidic residues" evidence="2">
    <location>
        <begin position="377"/>
        <end position="390"/>
    </location>
</feature>
<feature type="compositionally biased region" description="Basic and acidic residues" evidence="2">
    <location>
        <begin position="420"/>
        <end position="433"/>
    </location>
</feature>
<feature type="compositionally biased region" description="Gly residues" evidence="2">
    <location>
        <begin position="519"/>
        <end position="543"/>
    </location>
</feature>
<feature type="compositionally biased region" description="Low complexity" evidence="2">
    <location>
        <begin position="544"/>
        <end position="557"/>
    </location>
</feature>
<feature type="compositionally biased region" description="Gly residues" evidence="2">
    <location>
        <begin position="558"/>
        <end position="574"/>
    </location>
</feature>
<feature type="compositionally biased region" description="Low complexity" evidence="2">
    <location>
        <begin position="575"/>
        <end position="584"/>
    </location>
</feature>
<feature type="modified residue" description="Phosphoserine" evidence="6">
    <location>
        <position position="579"/>
    </location>
</feature>
<feature type="sequence conflict" description="In Ref. 1." evidence="5" ref="1">
    <original>PGGPGPSGPGGPGPG</original>
    <variation>LVGWASGLAAGPA</variation>
    <location>
        <begin position="213"/>
        <end position="227"/>
    </location>
</feature>
<feature type="sequence conflict" description="In Ref. 3; BAC39256." evidence="5" ref="3">
    <original>GGP</original>
    <variation>WWAL</variation>
    <location>
        <begin position="214"/>
        <end position="216"/>
    </location>
</feature>
<feature type="sequence conflict" description="In Ref. 3; BAC34240." evidence="5" ref="3">
    <original>P</original>
    <variation>S</variation>
    <location>
        <position position="221"/>
    </location>
</feature>
<feature type="sequence conflict" description="In Ref. 4; AAH26995." evidence="5" ref="4">
    <original>M</original>
    <variation>MEARGM</variation>
    <location>
        <position position="457"/>
    </location>
</feature>
<gene>
    <name type="primary">Cstf2t</name>
    <name type="synonym">Kiaa0689</name>
</gene>
<dbReference type="EMBL" id="AF322194">
    <property type="protein sequence ID" value="AAG40327.1"/>
    <property type="molecule type" value="mRNA"/>
</dbReference>
<dbReference type="EMBL" id="AK173002">
    <property type="protein sequence ID" value="BAD32280.1"/>
    <property type="status" value="ALT_INIT"/>
    <property type="molecule type" value="mRNA"/>
</dbReference>
<dbReference type="EMBL" id="AK034853">
    <property type="protein sequence ID" value="BAC28855.1"/>
    <property type="molecule type" value="mRNA"/>
</dbReference>
<dbReference type="EMBL" id="AK050407">
    <property type="protein sequence ID" value="BAC34240.1"/>
    <property type="molecule type" value="mRNA"/>
</dbReference>
<dbReference type="EMBL" id="AK082910">
    <property type="protein sequence ID" value="BAC38683.1"/>
    <property type="molecule type" value="mRNA"/>
</dbReference>
<dbReference type="EMBL" id="AK084696">
    <property type="protein sequence ID" value="BAC39256.1"/>
    <property type="status" value="ALT_FRAME"/>
    <property type="molecule type" value="mRNA"/>
</dbReference>
<dbReference type="EMBL" id="BC026995">
    <property type="protein sequence ID" value="AAH26995.1"/>
    <property type="molecule type" value="mRNA"/>
</dbReference>
<dbReference type="CCDS" id="CCDS37958.1"/>
<dbReference type="RefSeq" id="NP_112539.2">
    <property type="nucleotide sequence ID" value="NM_031249.2"/>
</dbReference>
<dbReference type="SMR" id="Q8C7E9"/>
<dbReference type="BioGRID" id="219918">
    <property type="interactions" value="30"/>
</dbReference>
<dbReference type="FunCoup" id="Q8C7E9">
    <property type="interactions" value="4405"/>
</dbReference>
<dbReference type="STRING" id="10090.ENSMUSP00000093831"/>
<dbReference type="iPTMnet" id="Q8C7E9"/>
<dbReference type="PhosphoSitePlus" id="Q8C7E9"/>
<dbReference type="SwissPalm" id="Q8C7E9"/>
<dbReference type="REPRODUCTION-2DPAGE" id="IPI00467932"/>
<dbReference type="jPOST" id="Q8C7E9"/>
<dbReference type="PaxDb" id="10090-ENSMUSP00000093831"/>
<dbReference type="PeptideAtlas" id="Q8C7E9"/>
<dbReference type="ProteomicsDB" id="283970"/>
<dbReference type="Pumba" id="Q8C7E9"/>
<dbReference type="Antibodypedia" id="27941">
    <property type="antibodies" value="199 antibodies from 29 providers"/>
</dbReference>
<dbReference type="DNASU" id="83410"/>
<dbReference type="Ensembl" id="ENSMUST00000066039.8">
    <property type="protein sequence ID" value="ENSMUSP00000093831.4"/>
    <property type="gene ID" value="ENSMUSG00000053536.8"/>
</dbReference>
<dbReference type="GeneID" id="83410"/>
<dbReference type="KEGG" id="mmu:83410"/>
<dbReference type="UCSC" id="uc008her.1">
    <property type="organism name" value="mouse"/>
</dbReference>
<dbReference type="AGR" id="MGI:1932622"/>
<dbReference type="CTD" id="23283"/>
<dbReference type="MGI" id="MGI:1932622">
    <property type="gene designation" value="Cstf2t"/>
</dbReference>
<dbReference type="VEuPathDB" id="HostDB:ENSMUSG00000053536"/>
<dbReference type="eggNOG" id="KOG0108">
    <property type="taxonomic scope" value="Eukaryota"/>
</dbReference>
<dbReference type="GeneTree" id="ENSGT00940000161661"/>
<dbReference type="HOGENOM" id="CLU_028601_3_1_1"/>
<dbReference type="InParanoid" id="Q8C7E9"/>
<dbReference type="OMA" id="QVQMADP"/>
<dbReference type="OrthoDB" id="272703at2759"/>
<dbReference type="PhylomeDB" id="Q8C7E9"/>
<dbReference type="TreeFam" id="TF314948"/>
<dbReference type="Reactome" id="R-MMU-72187">
    <property type="pathway name" value="mRNA 3'-end processing"/>
</dbReference>
<dbReference type="Reactome" id="R-MMU-72203">
    <property type="pathway name" value="Processing of Capped Intron-Containing Pre-mRNA"/>
</dbReference>
<dbReference type="Reactome" id="R-MMU-73856">
    <property type="pathway name" value="RNA Polymerase II Transcription Termination"/>
</dbReference>
<dbReference type="Reactome" id="R-MMU-77595">
    <property type="pathway name" value="Processing of Intronless Pre-mRNAs"/>
</dbReference>
<dbReference type="BioGRID-ORCS" id="83410">
    <property type="hits" value="4 hits in 76 CRISPR screens"/>
</dbReference>
<dbReference type="ChiTaRS" id="Cstf2t">
    <property type="organism name" value="mouse"/>
</dbReference>
<dbReference type="PRO" id="PR:Q8C7E9"/>
<dbReference type="Proteomes" id="UP000000589">
    <property type="component" value="Chromosome 19"/>
</dbReference>
<dbReference type="RNAct" id="Q8C7E9">
    <property type="molecule type" value="protein"/>
</dbReference>
<dbReference type="Bgee" id="ENSMUSG00000053536">
    <property type="expression patterns" value="Expressed in pineal body and 260 other cell types or tissues"/>
</dbReference>
<dbReference type="GO" id="GO:0005654">
    <property type="term" value="C:nucleoplasm"/>
    <property type="evidence" value="ECO:0007669"/>
    <property type="project" value="Ensembl"/>
</dbReference>
<dbReference type="GO" id="GO:0003723">
    <property type="term" value="F:RNA binding"/>
    <property type="evidence" value="ECO:0000314"/>
    <property type="project" value="MGI"/>
</dbReference>
<dbReference type="GO" id="GO:0031124">
    <property type="term" value="P:mRNA 3'-end processing"/>
    <property type="evidence" value="ECO:0000304"/>
    <property type="project" value="MGI"/>
</dbReference>
<dbReference type="CDD" id="cd12671">
    <property type="entry name" value="RRM_CSTF2_CSTF2T"/>
    <property type="match status" value="1"/>
</dbReference>
<dbReference type="FunFam" id="1.10.20.70:FF:000001">
    <property type="entry name" value="Cleavage stimulation factor subunit 2"/>
    <property type="match status" value="1"/>
</dbReference>
<dbReference type="FunFam" id="1.25.40.630:FF:000001">
    <property type="entry name" value="Cleavage stimulation factor subunit 2"/>
    <property type="match status" value="1"/>
</dbReference>
<dbReference type="FunFam" id="3.30.70.330:FF:000061">
    <property type="entry name" value="cleavage stimulation factor subunit 2 isoform X1"/>
    <property type="match status" value="1"/>
</dbReference>
<dbReference type="Gene3D" id="1.25.40.630">
    <property type="match status" value="1"/>
</dbReference>
<dbReference type="Gene3D" id="3.30.70.330">
    <property type="match status" value="1"/>
</dbReference>
<dbReference type="Gene3D" id="1.10.20.70">
    <property type="entry name" value="Transcription termination and cleavage factor, C-terminal domain"/>
    <property type="match status" value="1"/>
</dbReference>
<dbReference type="InterPro" id="IPR025742">
    <property type="entry name" value="CSTF2_hinge"/>
</dbReference>
<dbReference type="InterPro" id="IPR026896">
    <property type="entry name" value="CSTF_C"/>
</dbReference>
<dbReference type="InterPro" id="IPR038192">
    <property type="entry name" value="CSTF_C_sf"/>
</dbReference>
<dbReference type="InterPro" id="IPR012677">
    <property type="entry name" value="Nucleotide-bd_a/b_plait_sf"/>
</dbReference>
<dbReference type="InterPro" id="IPR035979">
    <property type="entry name" value="RBD_domain_sf"/>
</dbReference>
<dbReference type="InterPro" id="IPR000504">
    <property type="entry name" value="RRM_dom"/>
</dbReference>
<dbReference type="PANTHER" id="PTHR45735">
    <property type="entry name" value="CLEAVAGE STIMULATION FACTOR SUBUNIT 2"/>
    <property type="match status" value="1"/>
</dbReference>
<dbReference type="PANTHER" id="PTHR45735:SF2">
    <property type="entry name" value="CLEAVAGE STIMULATION FACTOR SUBUNIT 2"/>
    <property type="match status" value="1"/>
</dbReference>
<dbReference type="Pfam" id="PF14327">
    <property type="entry name" value="CSTF2_hinge"/>
    <property type="match status" value="1"/>
</dbReference>
<dbReference type="Pfam" id="PF14304">
    <property type="entry name" value="CSTF_C"/>
    <property type="match status" value="1"/>
</dbReference>
<dbReference type="Pfam" id="PF00076">
    <property type="entry name" value="RRM_1"/>
    <property type="match status" value="1"/>
</dbReference>
<dbReference type="SMART" id="SM00360">
    <property type="entry name" value="RRM"/>
    <property type="match status" value="1"/>
</dbReference>
<dbReference type="SUPFAM" id="SSF54928">
    <property type="entry name" value="RNA-binding domain, RBD"/>
    <property type="match status" value="1"/>
</dbReference>
<dbReference type="PROSITE" id="PS50102">
    <property type="entry name" value="RRM"/>
    <property type="match status" value="1"/>
</dbReference>
<name>CSTFT_MOUSE</name>
<protein>
    <recommendedName>
        <fullName>Cleavage stimulation factor subunit 2 tau variant</fullName>
    </recommendedName>
    <alternativeName>
        <fullName>CF-1 64 kDa subunit tau variant</fullName>
    </alternativeName>
    <alternativeName>
        <fullName>Cleavage stimulation factor 64 kDa subunit tau variant</fullName>
        <shortName>CSTF 64 kDa subunit tau variant</shortName>
    </alternativeName>
    <alternativeName>
        <fullName>TauCstF-64</fullName>
    </alternativeName>
</protein>
<comment type="function">
    <text evidence="3">May play a significant role in AAUAAA-independent mRNA polyadenylation in germ cells. Directly involved in the binding to pre-mRNAs.</text>
</comment>
<comment type="subcellular location">
    <subcellularLocation>
        <location evidence="4">Nucleus</location>
    </subcellularLocation>
</comment>
<comment type="tissue specificity">
    <text evidence="4">Expressed in testes, where it is restricted to pachytene spermatocytes and spermatids, and in the brain (at protein level).</text>
</comment>
<comment type="sequence caution" evidence="5">
    <conflict type="frameshift">
        <sequence resource="EMBL-CDS" id="BAC39256"/>
    </conflict>
</comment>
<comment type="sequence caution" evidence="5">
    <conflict type="erroneous initiation">
        <sequence resource="EMBL-CDS" id="BAD32280"/>
    </conflict>
</comment>
<keyword id="KW-0507">mRNA processing</keyword>
<keyword id="KW-0539">Nucleus</keyword>
<keyword id="KW-0597">Phosphoprotein</keyword>
<keyword id="KW-1185">Reference proteome</keyword>
<keyword id="KW-0677">Repeat</keyword>
<keyword id="KW-0694">RNA-binding</keyword>
<sequence length="632" mass="65862">MSSLAVRDPAMDRSLRSVFVGNIPYEATEEQLKDIFSEVGSVVSFRLVYDRETGKPKGYGFCEYQDQETALSAMRNLNGREFSGRALRVDNAASEKNKEELKSLGPAAPIIDSPYGDPIDPEDAPESITRAVASLPPEQMFELMKQMKLCVQNSHQEARNMLLQNPQLAYALLQAQVVMRIMDPEIALKILHRKIHVTPLIPGKSQPVSGPGPGGPGPSGPGGPGPGPAPGLCPGPNVMLNQQNPPAPQPQHLPRRPVKDIPPLMQTSIQGGIPAPGPIPAAVPGPGPGSLTPGGAMQPQVGMPVVGPVPLERGQMQISDPRPPMPRGPMPSGGIPPRGLLGDAPNDPRGGTLLSVTGEVEPRGYMGPPHQGPPMHHGHDNRGPASHDMRGGPLAADPRMLIGEPRGPMIDQRGLPMDGRGGRESRGMETRPMETEVLEPRGMERRMETCAMETRGMDARGLEMRGPGPSSRGPMTGGIQGPGPINMGAGGPQGPRQVPNIAGVGNPGGTMQGAGIQGGGMQGAGMQGGGMQGAGMQGGGMQGAGMQAGMQGASMQGGMQGAGMQGASKQGGGQPSSFSPGQSQVTPQDQEKAALIMQVLQLTADQIAMLPPEQRQSILILKEQIQKSTGAS</sequence>